<evidence type="ECO:0000255" key="1">
    <source>
        <dbReference type="HAMAP-Rule" id="MF_00402"/>
    </source>
</evidence>
<evidence type="ECO:0000305" key="2"/>
<keyword id="KW-1185">Reference proteome</keyword>
<keyword id="KW-0687">Ribonucleoprotein</keyword>
<keyword id="KW-0689">Ribosomal protein</keyword>
<proteinExistence type="inferred from homology"/>
<comment type="function">
    <text evidence="1">This protein is located at the 30S-50S ribosomal subunit interface and may play a role in the structure and function of the aminoacyl-tRNA binding site.</text>
</comment>
<comment type="similarity">
    <text evidence="1">Belongs to the bacterial ribosomal protein bL19 family.</text>
</comment>
<accession>Q3SNV5</accession>
<organism>
    <name type="scientific">Nitrobacter winogradskyi (strain ATCC 25391 / DSM 10237 / CIP 104748 / NCIMB 11846 / Nb-255)</name>
    <dbReference type="NCBI Taxonomy" id="323098"/>
    <lineage>
        <taxon>Bacteria</taxon>
        <taxon>Pseudomonadati</taxon>
        <taxon>Pseudomonadota</taxon>
        <taxon>Alphaproteobacteria</taxon>
        <taxon>Hyphomicrobiales</taxon>
        <taxon>Nitrobacteraceae</taxon>
        <taxon>Nitrobacter</taxon>
    </lineage>
</organism>
<name>RL19_NITWN</name>
<gene>
    <name evidence="1" type="primary">rplS</name>
    <name type="ordered locus">Nwi_2783</name>
</gene>
<sequence>MNIIQQLEKEQFDKLSATKTIPEFGPGDTVIVNVKVVEGERTRVQAYEGVCIGRSGGGLNESFTVRKISYGEGVERVFPVMSPMIDSIKVVRRGKVRRAKLYYLRKLRGKSARIVEKKTDRAAATN</sequence>
<feature type="chain" id="PRO_0000226857" description="Large ribosomal subunit protein bL19">
    <location>
        <begin position="1"/>
        <end position="126"/>
    </location>
</feature>
<protein>
    <recommendedName>
        <fullName evidence="1">Large ribosomal subunit protein bL19</fullName>
    </recommendedName>
    <alternativeName>
        <fullName evidence="2">50S ribosomal protein L19</fullName>
    </alternativeName>
</protein>
<dbReference type="EMBL" id="CP000115">
    <property type="protein sequence ID" value="ABA06036.1"/>
    <property type="molecule type" value="Genomic_DNA"/>
</dbReference>
<dbReference type="RefSeq" id="WP_011315981.1">
    <property type="nucleotide sequence ID" value="NC_007406.1"/>
</dbReference>
<dbReference type="SMR" id="Q3SNV5"/>
<dbReference type="STRING" id="323098.Nwi_2783"/>
<dbReference type="KEGG" id="nwi:Nwi_2783"/>
<dbReference type="eggNOG" id="COG0335">
    <property type="taxonomic scope" value="Bacteria"/>
</dbReference>
<dbReference type="HOGENOM" id="CLU_103507_2_1_5"/>
<dbReference type="OrthoDB" id="9803541at2"/>
<dbReference type="Proteomes" id="UP000002531">
    <property type="component" value="Chromosome"/>
</dbReference>
<dbReference type="GO" id="GO:0022625">
    <property type="term" value="C:cytosolic large ribosomal subunit"/>
    <property type="evidence" value="ECO:0007669"/>
    <property type="project" value="TreeGrafter"/>
</dbReference>
<dbReference type="GO" id="GO:0003735">
    <property type="term" value="F:structural constituent of ribosome"/>
    <property type="evidence" value="ECO:0007669"/>
    <property type="project" value="InterPro"/>
</dbReference>
<dbReference type="GO" id="GO:0006412">
    <property type="term" value="P:translation"/>
    <property type="evidence" value="ECO:0007669"/>
    <property type="project" value="UniProtKB-UniRule"/>
</dbReference>
<dbReference type="FunFam" id="2.30.30.790:FF:000001">
    <property type="entry name" value="50S ribosomal protein L19"/>
    <property type="match status" value="1"/>
</dbReference>
<dbReference type="Gene3D" id="2.30.30.790">
    <property type="match status" value="1"/>
</dbReference>
<dbReference type="HAMAP" id="MF_00402">
    <property type="entry name" value="Ribosomal_bL19"/>
    <property type="match status" value="1"/>
</dbReference>
<dbReference type="InterPro" id="IPR001857">
    <property type="entry name" value="Ribosomal_bL19"/>
</dbReference>
<dbReference type="InterPro" id="IPR018257">
    <property type="entry name" value="Ribosomal_bL19_CS"/>
</dbReference>
<dbReference type="InterPro" id="IPR038657">
    <property type="entry name" value="Ribosomal_bL19_sf"/>
</dbReference>
<dbReference type="InterPro" id="IPR008991">
    <property type="entry name" value="Translation_prot_SH3-like_sf"/>
</dbReference>
<dbReference type="NCBIfam" id="TIGR01024">
    <property type="entry name" value="rplS_bact"/>
    <property type="match status" value="1"/>
</dbReference>
<dbReference type="PANTHER" id="PTHR15680:SF9">
    <property type="entry name" value="LARGE RIBOSOMAL SUBUNIT PROTEIN BL19M"/>
    <property type="match status" value="1"/>
</dbReference>
<dbReference type="PANTHER" id="PTHR15680">
    <property type="entry name" value="RIBOSOMAL PROTEIN L19"/>
    <property type="match status" value="1"/>
</dbReference>
<dbReference type="Pfam" id="PF01245">
    <property type="entry name" value="Ribosomal_L19"/>
    <property type="match status" value="1"/>
</dbReference>
<dbReference type="PIRSF" id="PIRSF002191">
    <property type="entry name" value="Ribosomal_L19"/>
    <property type="match status" value="1"/>
</dbReference>
<dbReference type="PRINTS" id="PR00061">
    <property type="entry name" value="RIBOSOMALL19"/>
</dbReference>
<dbReference type="SUPFAM" id="SSF50104">
    <property type="entry name" value="Translation proteins SH3-like domain"/>
    <property type="match status" value="1"/>
</dbReference>
<dbReference type="PROSITE" id="PS01015">
    <property type="entry name" value="RIBOSOMAL_L19"/>
    <property type="match status" value="1"/>
</dbReference>
<reference key="1">
    <citation type="journal article" date="2006" name="Appl. Environ. Microbiol.">
        <title>Genome sequence of the chemolithoautotrophic nitrite-oxidizing bacterium Nitrobacter winogradskyi Nb-255.</title>
        <authorList>
            <person name="Starkenburg S.R."/>
            <person name="Chain P.S.G."/>
            <person name="Sayavedra-Soto L.A."/>
            <person name="Hauser L."/>
            <person name="Land M.L."/>
            <person name="Larimer F.W."/>
            <person name="Malfatti S.A."/>
            <person name="Klotz M.G."/>
            <person name="Bottomley P.J."/>
            <person name="Arp D.J."/>
            <person name="Hickey W.J."/>
        </authorList>
    </citation>
    <scope>NUCLEOTIDE SEQUENCE [LARGE SCALE GENOMIC DNA]</scope>
    <source>
        <strain>ATCC 25391 / DSM 10237 / CIP 104748 / NCIMB 11846 / Nb-255</strain>
    </source>
</reference>